<feature type="signal peptide" evidence="1">
    <location>
        <begin position="1"/>
        <end position="22"/>
    </location>
</feature>
<feature type="propeptide" id="PRO_0000446989" evidence="6">
    <location>
        <begin position="23"/>
        <end position="96"/>
    </location>
</feature>
<feature type="peptide" id="PRO_0000044517" description="Conotoxin flf14c" evidence="3">
    <location>
        <begin position="96"/>
        <end position="122"/>
    </location>
</feature>
<feature type="region of interest" description="Disordered" evidence="2">
    <location>
        <begin position="53"/>
        <end position="89"/>
    </location>
</feature>
<feature type="compositionally biased region" description="Basic and acidic residues" evidence="2">
    <location>
        <begin position="62"/>
        <end position="85"/>
    </location>
</feature>
<feature type="disulfide bond" evidence="3">
    <location>
        <begin position="101"/>
        <end position="121"/>
    </location>
</feature>
<feature type="disulfide bond" evidence="3">
    <location>
        <begin position="105"/>
        <end position="117"/>
    </location>
</feature>
<accession>P84707</accession>
<accession>A0A3G1VU88</accession>
<name>CREC_CONAW</name>
<organism>
    <name type="scientific">Conus anabathrum floridanus</name>
    <name type="common">Florida cone</name>
    <name type="synonym">Conus floridanus floridensis</name>
    <dbReference type="NCBI Taxonomy" id="1520082"/>
    <lineage>
        <taxon>Eukaryota</taxon>
        <taxon>Metazoa</taxon>
        <taxon>Spiralia</taxon>
        <taxon>Lophotrochozoa</taxon>
        <taxon>Mollusca</taxon>
        <taxon>Gastropoda</taxon>
        <taxon>Caenogastropoda</taxon>
        <taxon>Neogastropoda</taxon>
        <taxon>Conoidea</taxon>
        <taxon>Conidae</taxon>
        <taxon>Conus</taxon>
        <taxon>Dauciconus</taxon>
    </lineage>
</organism>
<protein>
    <recommendedName>
        <fullName evidence="4 5">Conotoxin flf14c</fullName>
    </recommendedName>
    <alternativeName>
        <fullName evidence="5">Conotoxin flf14.1</fullName>
    </alternativeName>
</protein>
<proteinExistence type="evidence at protein level"/>
<dbReference type="EMBL" id="MH750030">
    <property type="protein sequence ID" value="AYK27403.1"/>
    <property type="molecule type" value="mRNA"/>
</dbReference>
<dbReference type="SMR" id="P84707"/>
<dbReference type="ConoServer" id="1497">
    <property type="toxin name" value="FlfXIVC"/>
</dbReference>
<dbReference type="GO" id="GO:0005576">
    <property type="term" value="C:extracellular region"/>
    <property type="evidence" value="ECO:0007669"/>
    <property type="project" value="UniProtKB-SubCell"/>
</dbReference>
<dbReference type="GO" id="GO:0090729">
    <property type="term" value="F:toxin activity"/>
    <property type="evidence" value="ECO:0007669"/>
    <property type="project" value="UniProtKB-KW"/>
</dbReference>
<evidence type="ECO:0000255" key="1"/>
<evidence type="ECO:0000256" key="2">
    <source>
        <dbReference type="SAM" id="MobiDB-lite"/>
    </source>
</evidence>
<evidence type="ECO:0000269" key="3">
    <source>
    </source>
</evidence>
<evidence type="ECO:0000303" key="4">
    <source>
    </source>
</evidence>
<evidence type="ECO:0000303" key="5">
    <source>
    </source>
</evidence>
<evidence type="ECO:0000305" key="6"/>
<evidence type="ECO:0000305" key="7">
    <source>
    </source>
</evidence>
<keyword id="KW-0165">Cleavage on pair of basic residues</keyword>
<keyword id="KW-0903">Direct protein sequencing</keyword>
<keyword id="KW-1015">Disulfide bond</keyword>
<keyword id="KW-0964">Secreted</keyword>
<keyword id="KW-0732">Signal</keyword>
<keyword id="KW-0800">Toxin</keyword>
<reference key="1">
    <citation type="journal article" date="2018" name="Peptides">
        <title>Definition of the R-superfamily of conotoxins: structural convergence of helix-loop-helix peptidic scaffolds.</title>
        <authorList>
            <person name="Moeller C."/>
            <person name="Dovell S."/>
            <person name="Melaun C."/>
            <person name="Mari F."/>
        </authorList>
    </citation>
    <scope>NUCLEOTIDE SEQUENCE [MRNA]</scope>
    <source>
        <tissue>Venom duct</tissue>
    </source>
</reference>
<reference key="2">
    <citation type="journal article" date="2005" name="Biochemistry">
        <title>A novel conotoxin framework with a helix-loop-helix (Cs alpha/alpha) fold.</title>
        <authorList>
            <person name="Moller C."/>
            <person name="Rahmankhah S."/>
            <person name="Lauer-Fields J."/>
            <person name="Bubis J."/>
            <person name="Fields G.B."/>
            <person name="Mari F."/>
        </authorList>
    </citation>
    <scope>PROTEIN SEQUENCE OF 96-122</scope>
    <scope>SUBCELLULAR LOCATION</scope>
    <scope>MASS SPECTROMETRY</scope>
    <scope>DISULFIDE BONDS</scope>
    <source>
        <tissue>Venom</tissue>
    </source>
</reference>
<comment type="subcellular location">
    <subcellularLocation>
        <location evidence="3">Secreted</location>
    </subcellularLocation>
</comment>
<comment type="tissue specificity">
    <text evidence="7">Expressed by the venom duct.</text>
</comment>
<comment type="domain">
    <text evidence="6">The cysteine framework is XIV (C-C-C-C).</text>
</comment>
<comment type="mass spectrometry" mass="3280.4" error="0.1" method="MALDI" evidence="3"/>
<comment type="similarity">
    <text evidence="6">Belongs to the conotoxin R superfamily.</text>
</comment>
<sequence length="122" mass="14192">MGFRVLVLIVMVTTSALPFTFSEESGRSPFRPALRSEEAQALRHGLTLLLARRADGQTPDMHQPEMRRPEMRRPEVRRPEVRQPEFAESPVGQKRWDAYDCIQFCMRPEMRHTYAQCLSICT</sequence>